<dbReference type="EMBL" id="CP000382">
    <property type="protein sequence ID" value="ABK61660.1"/>
    <property type="molecule type" value="Genomic_DNA"/>
</dbReference>
<dbReference type="RefSeq" id="WP_011722326.1">
    <property type="nucleotide sequence ID" value="NC_008593.1"/>
</dbReference>
<dbReference type="SMR" id="A0Q128"/>
<dbReference type="STRING" id="386415.NT01CX_2257"/>
<dbReference type="KEGG" id="cno:NT01CX_2257"/>
<dbReference type="eggNOG" id="COG1327">
    <property type="taxonomic scope" value="Bacteria"/>
</dbReference>
<dbReference type="HOGENOM" id="CLU_108412_0_0_9"/>
<dbReference type="Proteomes" id="UP000008220">
    <property type="component" value="Chromosome"/>
</dbReference>
<dbReference type="GO" id="GO:0005524">
    <property type="term" value="F:ATP binding"/>
    <property type="evidence" value="ECO:0007669"/>
    <property type="project" value="UniProtKB-KW"/>
</dbReference>
<dbReference type="GO" id="GO:0003677">
    <property type="term" value="F:DNA binding"/>
    <property type="evidence" value="ECO:0007669"/>
    <property type="project" value="UniProtKB-KW"/>
</dbReference>
<dbReference type="GO" id="GO:0008270">
    <property type="term" value="F:zinc ion binding"/>
    <property type="evidence" value="ECO:0007669"/>
    <property type="project" value="UniProtKB-UniRule"/>
</dbReference>
<dbReference type="GO" id="GO:0045892">
    <property type="term" value="P:negative regulation of DNA-templated transcription"/>
    <property type="evidence" value="ECO:0007669"/>
    <property type="project" value="UniProtKB-UniRule"/>
</dbReference>
<dbReference type="HAMAP" id="MF_00440">
    <property type="entry name" value="NrdR"/>
    <property type="match status" value="1"/>
</dbReference>
<dbReference type="InterPro" id="IPR005144">
    <property type="entry name" value="ATP-cone_dom"/>
</dbReference>
<dbReference type="InterPro" id="IPR055173">
    <property type="entry name" value="NrdR-like_N"/>
</dbReference>
<dbReference type="InterPro" id="IPR003796">
    <property type="entry name" value="RNR_NrdR-like"/>
</dbReference>
<dbReference type="NCBIfam" id="TIGR00244">
    <property type="entry name" value="transcriptional regulator NrdR"/>
    <property type="match status" value="1"/>
</dbReference>
<dbReference type="PANTHER" id="PTHR30455">
    <property type="entry name" value="TRANSCRIPTIONAL REPRESSOR NRDR"/>
    <property type="match status" value="1"/>
</dbReference>
<dbReference type="PANTHER" id="PTHR30455:SF2">
    <property type="entry name" value="TRANSCRIPTIONAL REPRESSOR NRDR"/>
    <property type="match status" value="1"/>
</dbReference>
<dbReference type="Pfam" id="PF03477">
    <property type="entry name" value="ATP-cone"/>
    <property type="match status" value="1"/>
</dbReference>
<dbReference type="Pfam" id="PF22811">
    <property type="entry name" value="Zn_ribbon_NrdR"/>
    <property type="match status" value="1"/>
</dbReference>
<dbReference type="PROSITE" id="PS51161">
    <property type="entry name" value="ATP_CONE"/>
    <property type="match status" value="1"/>
</dbReference>
<comment type="function">
    <text evidence="1">Negatively regulates transcription of bacterial ribonucleotide reductase nrd genes and operons by binding to NrdR-boxes.</text>
</comment>
<comment type="cofactor">
    <cofactor evidence="1">
        <name>Zn(2+)</name>
        <dbReference type="ChEBI" id="CHEBI:29105"/>
    </cofactor>
    <text evidence="1">Binds 1 zinc ion.</text>
</comment>
<comment type="similarity">
    <text evidence="1">Belongs to the NrdR family.</text>
</comment>
<sequence length="158" mass="18783">MKCPYCGFEESKVVDSRSTEDHKAIRRRRECLKCNRRYTTYEKIEDIPVLVIKRDSNREYFDKTKIINGLVKACQKRPISRVQIDSIADEIEKKMNNDMLTEVKSEYIGELIMEKLKEIDEVSYVRFASVYRQFKDINTFIEEITNLMSDKHIGKIKK</sequence>
<keyword id="KW-0067">ATP-binding</keyword>
<keyword id="KW-0238">DNA-binding</keyword>
<keyword id="KW-0479">Metal-binding</keyword>
<keyword id="KW-0547">Nucleotide-binding</keyword>
<keyword id="KW-1185">Reference proteome</keyword>
<keyword id="KW-0678">Repressor</keyword>
<keyword id="KW-0804">Transcription</keyword>
<keyword id="KW-0805">Transcription regulation</keyword>
<keyword id="KW-0862">Zinc</keyword>
<keyword id="KW-0863">Zinc-finger</keyword>
<gene>
    <name evidence="1" type="primary">nrdR</name>
    <name type="ordered locus">NT01CX_2257</name>
</gene>
<organism>
    <name type="scientific">Clostridium novyi (strain NT)</name>
    <dbReference type="NCBI Taxonomy" id="386415"/>
    <lineage>
        <taxon>Bacteria</taxon>
        <taxon>Bacillati</taxon>
        <taxon>Bacillota</taxon>
        <taxon>Clostridia</taxon>
        <taxon>Eubacteriales</taxon>
        <taxon>Clostridiaceae</taxon>
        <taxon>Clostridium</taxon>
    </lineage>
</organism>
<name>NRDR_CLONN</name>
<feature type="chain" id="PRO_1000080736" description="Transcriptional repressor NrdR">
    <location>
        <begin position="1"/>
        <end position="158"/>
    </location>
</feature>
<feature type="domain" description="ATP-cone" evidence="1">
    <location>
        <begin position="49"/>
        <end position="139"/>
    </location>
</feature>
<feature type="zinc finger region" evidence="1">
    <location>
        <begin position="3"/>
        <end position="34"/>
    </location>
</feature>
<proteinExistence type="inferred from homology"/>
<protein>
    <recommendedName>
        <fullName evidence="1">Transcriptional repressor NrdR</fullName>
    </recommendedName>
</protein>
<evidence type="ECO:0000255" key="1">
    <source>
        <dbReference type="HAMAP-Rule" id="MF_00440"/>
    </source>
</evidence>
<reference key="1">
    <citation type="journal article" date="2006" name="Nat. Biotechnol.">
        <title>The genome and transcriptomes of the anti-tumor agent Clostridium novyi-NT.</title>
        <authorList>
            <person name="Bettegowda C."/>
            <person name="Huang X."/>
            <person name="Lin J."/>
            <person name="Cheong I."/>
            <person name="Kohli M."/>
            <person name="Szabo S.A."/>
            <person name="Zhang X."/>
            <person name="Diaz L.A. Jr."/>
            <person name="Velculescu V.E."/>
            <person name="Parmigiani G."/>
            <person name="Kinzler K.W."/>
            <person name="Vogelstein B."/>
            <person name="Zhou S."/>
        </authorList>
    </citation>
    <scope>NUCLEOTIDE SEQUENCE [LARGE SCALE GENOMIC DNA]</scope>
    <source>
        <strain>NT</strain>
    </source>
</reference>
<accession>A0Q128</accession>